<feature type="chain" id="PRO_1000079790" description="Large ribosomal subunit protein bL12">
    <location>
        <begin position="1"/>
        <end position="126"/>
    </location>
</feature>
<evidence type="ECO:0000255" key="1">
    <source>
        <dbReference type="HAMAP-Rule" id="MF_00368"/>
    </source>
</evidence>
<evidence type="ECO:0000305" key="2"/>
<dbReference type="EMBL" id="CP000733">
    <property type="protein sequence ID" value="ABS77426.1"/>
    <property type="molecule type" value="Genomic_DNA"/>
</dbReference>
<dbReference type="RefSeq" id="WP_005771617.1">
    <property type="nucleotide sequence ID" value="NC_009727.1"/>
</dbReference>
<dbReference type="SMR" id="A9KD40"/>
<dbReference type="KEGG" id="cbd:CBUD_1863"/>
<dbReference type="HOGENOM" id="CLU_086499_3_2_6"/>
<dbReference type="Proteomes" id="UP000008555">
    <property type="component" value="Chromosome"/>
</dbReference>
<dbReference type="GO" id="GO:0022625">
    <property type="term" value="C:cytosolic large ribosomal subunit"/>
    <property type="evidence" value="ECO:0007669"/>
    <property type="project" value="TreeGrafter"/>
</dbReference>
<dbReference type="GO" id="GO:0003729">
    <property type="term" value="F:mRNA binding"/>
    <property type="evidence" value="ECO:0007669"/>
    <property type="project" value="TreeGrafter"/>
</dbReference>
<dbReference type="GO" id="GO:0003735">
    <property type="term" value="F:structural constituent of ribosome"/>
    <property type="evidence" value="ECO:0007669"/>
    <property type="project" value="InterPro"/>
</dbReference>
<dbReference type="GO" id="GO:0006412">
    <property type="term" value="P:translation"/>
    <property type="evidence" value="ECO:0007669"/>
    <property type="project" value="UniProtKB-UniRule"/>
</dbReference>
<dbReference type="CDD" id="cd00387">
    <property type="entry name" value="Ribosomal_L7_L12"/>
    <property type="match status" value="1"/>
</dbReference>
<dbReference type="FunFam" id="3.30.1390.10:FF:000001">
    <property type="entry name" value="50S ribosomal protein L7/L12"/>
    <property type="match status" value="1"/>
</dbReference>
<dbReference type="Gene3D" id="3.30.1390.10">
    <property type="match status" value="1"/>
</dbReference>
<dbReference type="Gene3D" id="1.20.5.710">
    <property type="entry name" value="Single helix bin"/>
    <property type="match status" value="1"/>
</dbReference>
<dbReference type="HAMAP" id="MF_00368">
    <property type="entry name" value="Ribosomal_bL12"/>
    <property type="match status" value="1"/>
</dbReference>
<dbReference type="InterPro" id="IPR000206">
    <property type="entry name" value="Ribosomal_bL12"/>
</dbReference>
<dbReference type="InterPro" id="IPR013823">
    <property type="entry name" value="Ribosomal_bL12_C"/>
</dbReference>
<dbReference type="InterPro" id="IPR014719">
    <property type="entry name" value="Ribosomal_bL12_C/ClpS-like"/>
</dbReference>
<dbReference type="InterPro" id="IPR008932">
    <property type="entry name" value="Ribosomal_bL12_oligo"/>
</dbReference>
<dbReference type="InterPro" id="IPR036235">
    <property type="entry name" value="Ribosomal_bL12_oligo_N_sf"/>
</dbReference>
<dbReference type="NCBIfam" id="TIGR00855">
    <property type="entry name" value="L12"/>
    <property type="match status" value="1"/>
</dbReference>
<dbReference type="PANTHER" id="PTHR45987">
    <property type="entry name" value="39S RIBOSOMAL PROTEIN L12"/>
    <property type="match status" value="1"/>
</dbReference>
<dbReference type="PANTHER" id="PTHR45987:SF4">
    <property type="entry name" value="LARGE RIBOSOMAL SUBUNIT PROTEIN BL12M"/>
    <property type="match status" value="1"/>
</dbReference>
<dbReference type="Pfam" id="PF00542">
    <property type="entry name" value="Ribosomal_L12"/>
    <property type="match status" value="1"/>
</dbReference>
<dbReference type="Pfam" id="PF16320">
    <property type="entry name" value="Ribosomal_L12_N"/>
    <property type="match status" value="1"/>
</dbReference>
<dbReference type="SUPFAM" id="SSF54736">
    <property type="entry name" value="ClpS-like"/>
    <property type="match status" value="1"/>
</dbReference>
<dbReference type="SUPFAM" id="SSF48300">
    <property type="entry name" value="Ribosomal protein L7/12, oligomerisation (N-terminal) domain"/>
    <property type="match status" value="1"/>
</dbReference>
<reference key="1">
    <citation type="journal article" date="2009" name="Infect. Immun.">
        <title>Comparative genomics reveal extensive transposon-mediated genomic plasticity and diversity among potential effector proteins within the genus Coxiella.</title>
        <authorList>
            <person name="Beare P.A."/>
            <person name="Unsworth N."/>
            <person name="Andoh M."/>
            <person name="Voth D.E."/>
            <person name="Omsland A."/>
            <person name="Gilk S.D."/>
            <person name="Williams K.P."/>
            <person name="Sobral B.W."/>
            <person name="Kupko J.J. III"/>
            <person name="Porcella S.F."/>
            <person name="Samuel J.E."/>
            <person name="Heinzen R.A."/>
        </authorList>
    </citation>
    <scope>NUCLEOTIDE SEQUENCE [LARGE SCALE GENOMIC DNA]</scope>
    <source>
        <strain>Dugway 5J108-111</strain>
    </source>
</reference>
<keyword id="KW-0687">Ribonucleoprotein</keyword>
<keyword id="KW-0689">Ribosomal protein</keyword>
<sequence>MAQLSKDDILEAVANMSVMDVVDLVKAMEEKFGVSAQAAIAVAGPVAGGEAAAAEEKTEFNVKMVSFGDNKIGVIKAIRTITGLGLKEAKDLVESVPSVVKESVSKEEAEKIKKELEEAGAKVELE</sequence>
<protein>
    <recommendedName>
        <fullName evidence="1">Large ribosomal subunit protein bL12</fullName>
    </recommendedName>
    <alternativeName>
        <fullName evidence="2">50S ribosomal protein L7/L12</fullName>
    </alternativeName>
</protein>
<accession>A9KD40</accession>
<name>RL7_COXBN</name>
<gene>
    <name evidence="1" type="primary">rplL</name>
    <name type="ordered locus">CBUD_1863</name>
</gene>
<organism>
    <name type="scientific">Coxiella burnetii (strain Dugway 5J108-111)</name>
    <dbReference type="NCBI Taxonomy" id="434922"/>
    <lineage>
        <taxon>Bacteria</taxon>
        <taxon>Pseudomonadati</taxon>
        <taxon>Pseudomonadota</taxon>
        <taxon>Gammaproteobacteria</taxon>
        <taxon>Legionellales</taxon>
        <taxon>Coxiellaceae</taxon>
        <taxon>Coxiella</taxon>
    </lineage>
</organism>
<comment type="function">
    <text evidence="1">Forms part of the ribosomal stalk which helps the ribosome interact with GTP-bound translation factors. Is thus essential for accurate translation.</text>
</comment>
<comment type="subunit">
    <text evidence="1">Homodimer. Part of the ribosomal stalk of the 50S ribosomal subunit. Forms a multimeric L10(L12)X complex, where L10 forms an elongated spine to which 2 to 4 L12 dimers bind in a sequential fashion. Binds GTP-bound translation factors.</text>
</comment>
<comment type="similarity">
    <text evidence="1">Belongs to the bacterial ribosomal protein bL12 family.</text>
</comment>
<proteinExistence type="inferred from homology"/>